<dbReference type="EMBL" id="DQ229107">
    <property type="protein sequence ID" value="ABA61932.1"/>
    <property type="molecule type" value="Genomic_DNA"/>
</dbReference>
<dbReference type="RefSeq" id="YP_635716.1">
    <property type="nucleotide sequence ID" value="NC_008097.1"/>
</dbReference>
<dbReference type="SMR" id="Q1ACN1"/>
<dbReference type="GeneID" id="4100219"/>
<dbReference type="GO" id="GO:0009535">
    <property type="term" value="C:chloroplast thylakoid membrane"/>
    <property type="evidence" value="ECO:0007669"/>
    <property type="project" value="UniProtKB-SubCell"/>
</dbReference>
<dbReference type="GO" id="GO:0005886">
    <property type="term" value="C:plasma membrane"/>
    <property type="evidence" value="ECO:0007669"/>
    <property type="project" value="UniProtKB-UniRule"/>
</dbReference>
<dbReference type="GO" id="GO:0045259">
    <property type="term" value="C:proton-transporting ATP synthase complex"/>
    <property type="evidence" value="ECO:0007669"/>
    <property type="project" value="UniProtKB-KW"/>
</dbReference>
<dbReference type="GO" id="GO:0046933">
    <property type="term" value="F:proton-transporting ATP synthase activity, rotational mechanism"/>
    <property type="evidence" value="ECO:0007669"/>
    <property type="project" value="UniProtKB-UniRule"/>
</dbReference>
<dbReference type="CDD" id="cd00310">
    <property type="entry name" value="ATP-synt_Fo_a_6"/>
    <property type="match status" value="1"/>
</dbReference>
<dbReference type="FunFam" id="1.20.120.220:FF:000001">
    <property type="entry name" value="ATP synthase subunit a, chloroplastic"/>
    <property type="match status" value="1"/>
</dbReference>
<dbReference type="Gene3D" id="1.20.120.220">
    <property type="entry name" value="ATP synthase, F0 complex, subunit A"/>
    <property type="match status" value="1"/>
</dbReference>
<dbReference type="HAMAP" id="MF_01393">
    <property type="entry name" value="ATP_synth_a_bact"/>
    <property type="match status" value="1"/>
</dbReference>
<dbReference type="InterPro" id="IPR045082">
    <property type="entry name" value="ATP_syn_F0_a_bact/chloroplast"/>
</dbReference>
<dbReference type="InterPro" id="IPR000568">
    <property type="entry name" value="ATP_synth_F0_asu"/>
</dbReference>
<dbReference type="InterPro" id="IPR023011">
    <property type="entry name" value="ATP_synth_F0_asu_AS"/>
</dbReference>
<dbReference type="InterPro" id="IPR035908">
    <property type="entry name" value="F0_ATP_A_sf"/>
</dbReference>
<dbReference type="NCBIfam" id="TIGR01131">
    <property type="entry name" value="ATP_synt_6_or_A"/>
    <property type="match status" value="1"/>
</dbReference>
<dbReference type="PANTHER" id="PTHR42823">
    <property type="entry name" value="ATP SYNTHASE SUBUNIT A, CHLOROPLASTIC"/>
    <property type="match status" value="1"/>
</dbReference>
<dbReference type="PANTHER" id="PTHR42823:SF3">
    <property type="entry name" value="ATP SYNTHASE SUBUNIT A, CHLOROPLASTIC"/>
    <property type="match status" value="1"/>
</dbReference>
<dbReference type="Pfam" id="PF00119">
    <property type="entry name" value="ATP-synt_A"/>
    <property type="match status" value="1"/>
</dbReference>
<dbReference type="PRINTS" id="PR00123">
    <property type="entry name" value="ATPASEA"/>
</dbReference>
<dbReference type="SUPFAM" id="SSF81336">
    <property type="entry name" value="F1F0 ATP synthase subunit A"/>
    <property type="match status" value="1"/>
</dbReference>
<dbReference type="PROSITE" id="PS00449">
    <property type="entry name" value="ATPASE_A"/>
    <property type="match status" value="1"/>
</dbReference>
<accession>Q1ACN1</accession>
<evidence type="ECO:0000255" key="1">
    <source>
        <dbReference type="HAMAP-Rule" id="MF_01393"/>
    </source>
</evidence>
<feature type="chain" id="PRO_0000362539" description="ATP synthase subunit a, chloroplastic">
    <location>
        <begin position="1"/>
        <end position="246"/>
    </location>
</feature>
<feature type="transmembrane region" description="Helical" evidence="1">
    <location>
        <begin position="35"/>
        <end position="55"/>
    </location>
</feature>
<feature type="transmembrane region" description="Helical" evidence="1">
    <location>
        <begin position="94"/>
        <end position="114"/>
    </location>
</feature>
<feature type="transmembrane region" description="Helical" evidence="1">
    <location>
        <begin position="132"/>
        <end position="152"/>
    </location>
</feature>
<feature type="transmembrane region" description="Helical" evidence="1">
    <location>
        <begin position="198"/>
        <end position="218"/>
    </location>
</feature>
<feature type="transmembrane region" description="Helical" evidence="1">
    <location>
        <begin position="219"/>
        <end position="239"/>
    </location>
</feature>
<geneLocation type="chloroplast"/>
<protein>
    <recommendedName>
        <fullName evidence="1">ATP synthase subunit a, chloroplastic</fullName>
    </recommendedName>
    <alternativeName>
        <fullName evidence="1">ATP synthase F0 sector subunit a</fullName>
    </alternativeName>
    <alternativeName>
        <fullName evidence="1">F-ATPase subunit IV</fullName>
    </alternativeName>
</protein>
<sequence length="246" mass="27605">MYNLCYIQNLLEYQIAAVEVGQHLYWEIGNFEVHAQVLITSWIVIGLILGLTFLATQNLQFIPTQNQNLIEYILEFIRDLTKSQIGESEYRPWIPFIGTMFLFIFVSNWSGALIPFKLVQLPNGELAAPTNDINTTVALALLTSVAYFYAGLRKKGLSYFGKYIKPTPILLPINILEDFTKPLSLSFRLFGNILADELVVAVLVSLVPLVVPIPMMFLGLFTSAIQALIFATLAAAYIGESIEDHH</sequence>
<keyword id="KW-0066">ATP synthesis</keyword>
<keyword id="KW-0138">CF(0)</keyword>
<keyword id="KW-0150">Chloroplast</keyword>
<keyword id="KW-0375">Hydrogen ion transport</keyword>
<keyword id="KW-0406">Ion transport</keyword>
<keyword id="KW-0472">Membrane</keyword>
<keyword id="KW-0934">Plastid</keyword>
<keyword id="KW-0793">Thylakoid</keyword>
<keyword id="KW-0812">Transmembrane</keyword>
<keyword id="KW-1133">Transmembrane helix</keyword>
<keyword id="KW-0813">Transport</keyword>
<comment type="function">
    <text evidence="1">Key component of the proton channel; it plays a direct role in the translocation of protons across the membrane.</text>
</comment>
<comment type="subunit">
    <text evidence="1">F-type ATPases have 2 components, CF(1) - the catalytic core - and CF(0) - the membrane proton channel. CF(1) has five subunits: alpha(3), beta(3), gamma(1), delta(1), epsilon(1). CF(0) has four main subunits: a, b, b' and c.</text>
</comment>
<comment type="subcellular location">
    <subcellularLocation>
        <location evidence="1">Plastid</location>
        <location evidence="1">Chloroplast thylakoid membrane</location>
        <topology evidence="1">Multi-pass membrane protein</topology>
    </subcellularLocation>
</comment>
<comment type="similarity">
    <text evidence="1">Belongs to the ATPase A chain family.</text>
</comment>
<name>ATPI_CHAVU</name>
<reference key="1">
    <citation type="journal article" date="2006" name="Mol. Biol. Evol.">
        <title>The chloroplast genome sequence of Chara vulgaris sheds new light into the closest green algal relatives of land plants.</title>
        <authorList>
            <person name="Turmel M."/>
            <person name="Otis C."/>
            <person name="Lemieux C."/>
        </authorList>
    </citation>
    <scope>NUCLEOTIDE SEQUENCE [LARGE SCALE GENOMIC DNA]</scope>
</reference>
<proteinExistence type="inferred from homology"/>
<organism>
    <name type="scientific">Chara vulgaris</name>
    <name type="common">Common stonewort</name>
    <dbReference type="NCBI Taxonomy" id="55564"/>
    <lineage>
        <taxon>Eukaryota</taxon>
        <taxon>Viridiplantae</taxon>
        <taxon>Streptophyta</taxon>
        <taxon>Charophyceae</taxon>
        <taxon>Charales</taxon>
        <taxon>Characeae</taxon>
        <taxon>Chara</taxon>
    </lineage>
</organism>
<gene>
    <name evidence="1" type="primary">atpI</name>
</gene>